<evidence type="ECO:0000250" key="1"/>
<evidence type="ECO:0000250" key="2">
    <source>
        <dbReference type="UniProtKB" id="Q5TBA9"/>
    </source>
</evidence>
<evidence type="ECO:0000256" key="3">
    <source>
        <dbReference type="SAM" id="MobiDB-lite"/>
    </source>
</evidence>
<evidence type="ECO:0000269" key="4">
    <source>
    </source>
</evidence>
<evidence type="ECO:0000303" key="5">
    <source>
    </source>
</evidence>
<evidence type="ECO:0000303" key="6">
    <source>
    </source>
</evidence>
<evidence type="ECO:0000303" key="7">
    <source ref="3"/>
</evidence>
<evidence type="ECO:0000305" key="8"/>
<evidence type="ECO:0007744" key="9">
    <source>
    </source>
</evidence>
<proteinExistence type="evidence at protein level"/>
<protein>
    <recommendedName>
        <fullName>Protein furry homolog</fullName>
    </recommendedName>
</protein>
<feature type="chain" id="PRO_0000420369" description="Protein furry homolog">
    <location>
        <begin position="1"/>
        <end position="3020"/>
    </location>
</feature>
<feature type="region of interest" description="Disordered" evidence="3">
    <location>
        <begin position="1378"/>
        <end position="1404"/>
    </location>
</feature>
<feature type="region of interest" description="Disordered" evidence="3">
    <location>
        <begin position="1529"/>
        <end position="1554"/>
    </location>
</feature>
<feature type="region of interest" description="Disordered" evidence="3">
    <location>
        <begin position="1746"/>
        <end position="1773"/>
    </location>
</feature>
<feature type="region of interest" description="Disordered" evidence="3">
    <location>
        <begin position="1937"/>
        <end position="2042"/>
    </location>
</feature>
<feature type="region of interest" description="Disordered" evidence="3">
    <location>
        <begin position="2355"/>
        <end position="2384"/>
    </location>
</feature>
<feature type="region of interest" description="Disordered" evidence="3">
    <location>
        <begin position="2439"/>
        <end position="2458"/>
    </location>
</feature>
<feature type="region of interest" description="Disordered" evidence="3">
    <location>
        <begin position="2508"/>
        <end position="2535"/>
    </location>
</feature>
<feature type="compositionally biased region" description="Low complexity" evidence="3">
    <location>
        <begin position="1752"/>
        <end position="1772"/>
    </location>
</feature>
<feature type="compositionally biased region" description="Low complexity" evidence="3">
    <location>
        <begin position="1937"/>
        <end position="1956"/>
    </location>
</feature>
<feature type="compositionally biased region" description="Gly residues" evidence="3">
    <location>
        <begin position="1966"/>
        <end position="1976"/>
    </location>
</feature>
<feature type="compositionally biased region" description="Polar residues" evidence="3">
    <location>
        <begin position="2016"/>
        <end position="2042"/>
    </location>
</feature>
<feature type="compositionally biased region" description="Low complexity" evidence="3">
    <location>
        <begin position="2369"/>
        <end position="2384"/>
    </location>
</feature>
<feature type="compositionally biased region" description="Acidic residues" evidence="3">
    <location>
        <begin position="2526"/>
        <end position="2535"/>
    </location>
</feature>
<feature type="modified residue" description="Phosphotyrosine" evidence="2">
    <location>
        <position position="213"/>
    </location>
</feature>
<feature type="modified residue" description="Phosphoserine" evidence="9">
    <location>
        <position position="1382"/>
    </location>
</feature>
<feature type="modified residue" description="Phosphoserine" evidence="9">
    <location>
        <position position="1383"/>
    </location>
</feature>
<feature type="modified residue" description="Phosphoserine" evidence="9">
    <location>
        <position position="1936"/>
    </location>
</feature>
<feature type="modified residue" description="Phosphoserine" evidence="9">
    <location>
        <position position="1940"/>
    </location>
</feature>
<feature type="modified residue" description="Phosphoserine" evidence="9">
    <location>
        <position position="2427"/>
    </location>
</feature>
<feature type="modified residue" description="Phosphoserine" evidence="9">
    <location>
        <position position="2428"/>
    </location>
</feature>
<feature type="modified residue" description="Phosphoserine" evidence="9">
    <location>
        <position position="2495"/>
    </location>
</feature>
<feature type="modified residue" description="Phosphothreonine; by CDK1" evidence="4">
    <location>
        <position position="2516"/>
    </location>
</feature>
<feature type="modified residue" description="Phosphoserine" evidence="9">
    <location>
        <position position="2815"/>
    </location>
</feature>
<feature type="splice variant" id="VSP_044441" description="In isoform 3." evidence="6">
    <original>MASQQDSGFFEISIKYLLKSWSN</original>
    <variation>MEITTACWRRSCVISLIKGL</variation>
    <location>
        <begin position="1"/>
        <end position="23"/>
    </location>
</feature>
<feature type="splice variant" id="VSP_044442" description="In isoform 3." evidence="6">
    <original>ATLPPTHNVD</original>
    <variation>VSRRVVPNAI</variation>
    <location>
        <begin position="808"/>
        <end position="817"/>
    </location>
</feature>
<feature type="splice variant" id="VSP_044443" description="In isoform 3." evidence="6">
    <location>
        <begin position="818"/>
        <end position="3020"/>
    </location>
</feature>
<feature type="splice variant" id="VSP_044444" description="In isoform 2." evidence="5 6 7">
    <original>E</original>
    <variation>EELQ</variation>
    <location>
        <position position="2480"/>
    </location>
</feature>
<feature type="splice variant" id="VSP_044445" description="In isoform 2." evidence="5 6 7">
    <original>Q</original>
    <variation>QMESLAQ</variation>
    <location>
        <position position="2831"/>
    </location>
</feature>
<feature type="mutagenesis site" description="Loss of phosphorylation by CDK1. Loss of PLK1-binding." evidence="4">
    <original>T</original>
    <variation>A</variation>
    <location>
        <position position="2516"/>
    </location>
</feature>
<feature type="mutagenesis site" description="Loss of PLK1-binding." evidence="4">
    <original>T</original>
    <variation>E</variation>
    <location>
        <position position="2516"/>
    </location>
</feature>
<feature type="sequence conflict" description="In Ref. 1; BAC39723." evidence="8" ref="1">
    <original>P</original>
    <variation>Q</variation>
    <location>
        <position position="363"/>
    </location>
</feature>
<feature type="sequence conflict" description="In Ref. 4; AAH42756." evidence="8" ref="4">
    <original>RAM</original>
    <variation>TRP</variation>
    <location>
        <begin position="2366"/>
        <end position="2368"/>
    </location>
</feature>
<feature type="sequence conflict" description="In Ref. 3; BAD90515." evidence="8" ref="3">
    <original>C</original>
    <variation>G</variation>
    <location>
        <position position="2630"/>
    </location>
</feature>
<feature type="sequence conflict" description="In Ref. 3; BAD90515." evidence="8" ref="3">
    <original>A</original>
    <variation>V</variation>
    <location>
        <position position="2687"/>
    </location>
</feature>
<feature type="sequence conflict" description="In Ref. 4; AAH96532." evidence="8" ref="4">
    <original>L</original>
    <variation>P</variation>
    <location>
        <position position="2763"/>
    </location>
</feature>
<comment type="function">
    <text evidence="4">Plays a crucial role in the structural integrity of mitotic centrosomes and in the maintenance of spindle bipolarity by promoting PLK1 activity at the spindle poles in early mitosis. May function as a scaffold promoting the interaction between AURKA and PLK1, thereby enhancing AURKA-mediated PLK1 phosphorylation.</text>
</comment>
<comment type="subunit">
    <text evidence="4">When phosphorylated by CDK1, interacts with PLK1; this interaction occurs in mitotic cells, but not in interphase cells, and leads to further FRY phosphorylation by PLK1.</text>
</comment>
<comment type="subcellular location">
    <subcellularLocation>
        <location evidence="1">Cytoplasm</location>
    </subcellularLocation>
    <subcellularLocation>
        <location evidence="1">Cytoplasm</location>
        <location evidence="1">Cytoskeleton</location>
        <location evidence="1">Microtubule organizing center</location>
        <location evidence="1">Centrosome</location>
    </subcellularLocation>
    <subcellularLocation>
        <location evidence="1">Cytoplasm</location>
        <location evidence="1">Cytoskeleton</location>
        <location evidence="1">Spindle pole</location>
    </subcellularLocation>
    <text evidence="1">Distributed diffusely throughout the cytoplasm in interphase. Localizes to the separating centrosomes in prophase, to the spindle poles and spindle microtubules in prometaphase to metaphase, to spindle microtubules in anaphase and to the distal sections of the midbody in cytokinesis. Colocalizes with PLK1 to separating centrosomes and spindle poles from prophase to metaphase in mitosis, but not in other stages of the cell cycle (By similarity).</text>
</comment>
<comment type="alternative products">
    <event type="alternative splicing"/>
    <isoform>
        <id>E9Q8I9-1</id>
        <name>1</name>
        <sequence type="displayed"/>
    </isoform>
    <isoform>
        <id>E9Q8I9-2</id>
        <name>2</name>
        <sequence type="described" ref="VSP_044444 VSP_044445"/>
    </isoform>
    <isoform>
        <id>E9Q8I9-3</id>
        <name>3</name>
        <sequence type="described" ref="VSP_044441 VSP_044442 VSP_044443"/>
    </isoform>
</comment>
<comment type="PTM">
    <text evidence="4">Phosphorylated by AURKA, CDK1 and PLK1.</text>
</comment>
<comment type="miscellaneous">
    <molecule>Isoform 2</molecule>
    <text evidence="8">May be due to an intron retention.</text>
</comment>
<comment type="similarity">
    <text evidence="8">Belongs to the furry protein family.</text>
</comment>
<comment type="sequence caution" evidence="8">
    <conflict type="erroneous initiation">
        <sequence resource="EMBL-CDS" id="BAC37538"/>
    </conflict>
    <text>Truncated N-terminus.</text>
</comment>
<dbReference type="EMBL" id="AK079097">
    <property type="protein sequence ID" value="BAC37538.1"/>
    <property type="status" value="ALT_INIT"/>
    <property type="molecule type" value="mRNA"/>
</dbReference>
<dbReference type="EMBL" id="AK086708">
    <property type="protein sequence ID" value="BAC39723.1"/>
    <property type="molecule type" value="mRNA"/>
</dbReference>
<dbReference type="EMBL" id="AC084217">
    <property type="status" value="NOT_ANNOTATED_CDS"/>
    <property type="molecule type" value="Genomic_DNA"/>
</dbReference>
<dbReference type="EMBL" id="AC154885">
    <property type="status" value="NOT_ANNOTATED_CDS"/>
    <property type="molecule type" value="Genomic_DNA"/>
</dbReference>
<dbReference type="EMBL" id="AK220506">
    <property type="protein sequence ID" value="BAD90515.1"/>
    <property type="molecule type" value="mRNA"/>
</dbReference>
<dbReference type="EMBL" id="BC042756">
    <property type="protein sequence ID" value="AAH42756.1"/>
    <property type="molecule type" value="mRNA"/>
</dbReference>
<dbReference type="EMBL" id="BC096532">
    <property type="protein sequence ID" value="AAH96532.1"/>
    <property type="molecule type" value="mRNA"/>
</dbReference>
<dbReference type="CCDS" id="CCDS51708.1">
    <molecule id="E9Q8I9-1"/>
</dbReference>
<dbReference type="RefSeq" id="NP_766475.2">
    <molecule id="E9Q8I9-1"/>
    <property type="nucleotide sequence ID" value="NM_172887.2"/>
</dbReference>
<dbReference type="RefSeq" id="XP_006504993.1">
    <molecule id="E9Q8I9-2"/>
    <property type="nucleotide sequence ID" value="XM_006504930.5"/>
</dbReference>
<dbReference type="BioGRID" id="235965">
    <property type="interactions" value="6"/>
</dbReference>
<dbReference type="FunCoup" id="E9Q8I9">
    <property type="interactions" value="1175"/>
</dbReference>
<dbReference type="IntAct" id="E9Q8I9">
    <property type="interactions" value="4"/>
</dbReference>
<dbReference type="MINT" id="E9Q8I9"/>
<dbReference type="STRING" id="10090.ENSMUSP00000084454"/>
<dbReference type="GlyGen" id="E9Q8I9">
    <property type="glycosylation" value="5 sites, 3 N-linked glycans (3 sites), 1 O-linked glycan (1 site)"/>
</dbReference>
<dbReference type="iPTMnet" id="E9Q8I9"/>
<dbReference type="PhosphoSitePlus" id="E9Q8I9"/>
<dbReference type="SwissPalm" id="E9Q8I9"/>
<dbReference type="jPOST" id="E9Q8I9"/>
<dbReference type="PaxDb" id="10090-ENSMUSP00000084454"/>
<dbReference type="PeptideAtlas" id="E9Q8I9"/>
<dbReference type="ProteomicsDB" id="271637">
    <molecule id="E9Q8I9-1"/>
</dbReference>
<dbReference type="ProteomicsDB" id="271638">
    <molecule id="E9Q8I9-2"/>
</dbReference>
<dbReference type="ProteomicsDB" id="271639">
    <molecule id="E9Q8I9-3"/>
</dbReference>
<dbReference type="Pumba" id="E9Q8I9"/>
<dbReference type="Antibodypedia" id="63056">
    <property type="antibodies" value="29 antibodies from 8 providers"/>
</dbReference>
<dbReference type="Ensembl" id="ENSMUST00000087204.9">
    <molecule id="E9Q8I9-1"/>
    <property type="protein sequence ID" value="ENSMUSP00000084454.6"/>
    <property type="gene ID" value="ENSMUSG00000056602.14"/>
</dbReference>
<dbReference type="GeneID" id="320365"/>
<dbReference type="KEGG" id="mmu:320365"/>
<dbReference type="UCSC" id="uc009att.1">
    <molecule id="E9Q8I9-3"/>
    <property type="organism name" value="mouse"/>
</dbReference>
<dbReference type="UCSC" id="uc009atv.2">
    <molecule id="E9Q8I9-1"/>
    <property type="organism name" value="mouse"/>
</dbReference>
<dbReference type="AGR" id="MGI:2443895"/>
<dbReference type="CTD" id="10129"/>
<dbReference type="MGI" id="MGI:2443895">
    <property type="gene designation" value="Fry"/>
</dbReference>
<dbReference type="VEuPathDB" id="HostDB:ENSMUSG00000056602"/>
<dbReference type="eggNOG" id="KOG1825">
    <property type="taxonomic scope" value="Eukaryota"/>
</dbReference>
<dbReference type="GeneTree" id="ENSGT00610000086058"/>
<dbReference type="HOGENOM" id="CLU_000483_0_0_1"/>
<dbReference type="InParanoid" id="E9Q8I9"/>
<dbReference type="OMA" id="CGVLCMQ"/>
<dbReference type="OrthoDB" id="6287725at2759"/>
<dbReference type="PhylomeDB" id="E9Q8I9"/>
<dbReference type="TreeFam" id="TF313568"/>
<dbReference type="BioGRID-ORCS" id="320365">
    <property type="hits" value="1 hit in 77 CRISPR screens"/>
</dbReference>
<dbReference type="CD-CODE" id="CE726F99">
    <property type="entry name" value="Postsynaptic density"/>
</dbReference>
<dbReference type="ChiTaRS" id="Fry">
    <property type="organism name" value="mouse"/>
</dbReference>
<dbReference type="PRO" id="PR:E9Q8I9"/>
<dbReference type="Proteomes" id="UP000000589">
    <property type="component" value="Chromosome 5"/>
</dbReference>
<dbReference type="RNAct" id="E9Q8I9">
    <property type="molecule type" value="protein"/>
</dbReference>
<dbReference type="Bgee" id="ENSMUSG00000056602">
    <property type="expression patterns" value="Expressed in ascending aorta and 261 other cell types or tissues"/>
</dbReference>
<dbReference type="ExpressionAtlas" id="E9Q8I9">
    <property type="expression patterns" value="baseline and differential"/>
</dbReference>
<dbReference type="GO" id="GO:0005813">
    <property type="term" value="C:centrosome"/>
    <property type="evidence" value="ECO:0007669"/>
    <property type="project" value="UniProtKB-SubCell"/>
</dbReference>
<dbReference type="GO" id="GO:0005737">
    <property type="term" value="C:cytoplasm"/>
    <property type="evidence" value="ECO:0007669"/>
    <property type="project" value="UniProtKB-SubCell"/>
</dbReference>
<dbReference type="GO" id="GO:0000922">
    <property type="term" value="C:spindle pole"/>
    <property type="evidence" value="ECO:0007669"/>
    <property type="project" value="UniProtKB-SubCell"/>
</dbReference>
<dbReference type="GO" id="GO:0004857">
    <property type="term" value="F:enzyme inhibitor activity"/>
    <property type="evidence" value="ECO:0000314"/>
    <property type="project" value="HGNC"/>
</dbReference>
<dbReference type="GO" id="GO:0000902">
    <property type="term" value="P:cell morphogenesis"/>
    <property type="evidence" value="ECO:0007669"/>
    <property type="project" value="InterPro"/>
</dbReference>
<dbReference type="GO" id="GO:1904428">
    <property type="term" value="P:negative regulation of tubulin deacetylation"/>
    <property type="evidence" value="ECO:0000314"/>
    <property type="project" value="HGNC"/>
</dbReference>
<dbReference type="InterPro" id="IPR016024">
    <property type="entry name" value="ARM-type_fold"/>
</dbReference>
<dbReference type="InterPro" id="IPR025614">
    <property type="entry name" value="Cell_morpho_N"/>
</dbReference>
<dbReference type="InterPro" id="IPR025481">
    <property type="entry name" value="Cell_Morphogen_C"/>
</dbReference>
<dbReference type="InterPro" id="IPR045842">
    <property type="entry name" value="Fry_C"/>
</dbReference>
<dbReference type="InterPro" id="IPR039867">
    <property type="entry name" value="Furry/Tao3/Mor2"/>
</dbReference>
<dbReference type="InterPro" id="IPR029473">
    <property type="entry name" value="MOR2-PAG1_mid"/>
</dbReference>
<dbReference type="PANTHER" id="PTHR12295">
    <property type="entry name" value="FURRY-RELATED"/>
    <property type="match status" value="1"/>
</dbReference>
<dbReference type="PANTHER" id="PTHR12295:SF29">
    <property type="entry name" value="PROTEIN FURRY HOMOLOG"/>
    <property type="match status" value="1"/>
</dbReference>
<dbReference type="Pfam" id="PF19421">
    <property type="entry name" value="Fry_C"/>
    <property type="match status" value="1"/>
</dbReference>
<dbReference type="Pfam" id="PF14225">
    <property type="entry name" value="MOR2-PAG1_C"/>
    <property type="match status" value="1"/>
</dbReference>
<dbReference type="Pfam" id="PF14228">
    <property type="entry name" value="MOR2-PAG1_mid"/>
    <property type="match status" value="3"/>
</dbReference>
<dbReference type="Pfam" id="PF14222">
    <property type="entry name" value="MOR2-PAG1_N"/>
    <property type="match status" value="1"/>
</dbReference>
<dbReference type="SUPFAM" id="SSF48371">
    <property type="entry name" value="ARM repeat"/>
    <property type="match status" value="1"/>
</dbReference>
<accession>E9Q8I9</accession>
<accession>Q4VA57</accession>
<accession>Q5DTL4</accession>
<accession>Q8BIW6</accession>
<accession>Q8BUA0</accession>
<accession>Q8CG91</accession>
<gene>
    <name type="primary">Fry</name>
    <name type="synonym">Kiaa4143</name>
</gene>
<sequence length="3020" mass="339093">MASQQDSGFFEISIKYLLKSWSNASPVGNGYIKPPVPPASGTHREKGPPAMLPINVDPDSKPGEYVLKSLFVNFTTQAERKIRIIMAEPLEKPLTKSLQRGEDPQFDQVISSMSSLSEYCLPSILRTLFDWYKRQNGIEDESHEYRPRTSNKSKSDEQQRDYLMERRDLAIDFIFSLVLIEVLKQIPLHPVIDSLIHDIINLAFKHFKYKEGYLGPNTGNMHIVADLYAEVIGVLAQAKFPAVKKKFMAELKELRHKEQSPYVVQSIISLIMGMKFFRIKMYPVEDFEASLQFMQECAHYFLEVKDKDIKHALAGLFVEILVPVAAAVKNEVNVPCLRNFVESLYDTTLELSSRKKHSLALYPLVTCLLCVSQKQLFLNRWHVFLNNCLSNLKNKDPKMARVALESLYRLLWVYMIRIKCESNTATQSRLITITTTLFPKGSRGVVPRDMPLNIFVKIIQFIAQERLDFAMKEIIFDFLCVGKPAKAFSLNPERMNIGLRAFLVIADSLQQKDGEPPMPVTGAVLPSGNTLRVKKTYLSKTLTEEEAKMIGMSLYYSQVRKAVGNILRHLDKEVGRCMMLTNVQMLNKEPEDMITGERKPKIDLFRTCVAAIPRLLPDGMSKLELIDLLARLSIHMDDELRHIAQNSLQGLLVDFSDWREDVLFGFTNFLLREVNDMHHTLLDSSLKLLLQLLTQWKLVIQTQGRAYEQANKIRNSELIPNGSSHRMQSERGPHCSVLHAVEGFALVLLCSFQVATRKLSVLILKEIRALFLALGQPEDDDRPMIDVMDQLSSSILESFIHVAVSDSATLPPTHNVDLQWLVEWNAVLVNSHYDVKSPSHVWIFAQSVKDPWVLCLFSFLRQENLPKHCPTALSYAWPYAFTRLQSVMPLVDPNSPVNAKKTSTASSGDNYVTLWRNYLILCFGVAKPSIMSPGHLRASTPEIMATTPDGTVSYDNKAIGTPSVGVLLKQLVPLMRLESIEITESLVLGFGRTNSLVFRELVEELHPLMKEALERRPENKKRRERRDLLRLQLLRIFELLADAGVISDSTNGALERDTLALGALFLEYVDLTRMLLEAENDKEVEILKDIRAHFSAMVANLIQCVPVHHRRFLFPQQSLRHHLFILFSQWAGPFSIMFTPLDRYSDRNHQITRYQYCALKAMSAVLCCGPVFDNVGLSPDGYLYKWLDNILACQDLRVHQLGCEVVMLLLELNPDQINLFNWAIDRCYTGSYQLASGCFKAIATVCGNRNYPFDIVTLLNLVLFKASDTNREIYEVSMQLMQILEAKLFVHSKKVAEQRPGSILYGTHGPLPPLYSVSLALLSCELARMYPELTLPLFSEVSQRFPTTHPNGRQIMLTYLLPWLHNIELVDSRLLLPGSSPSSPEDEVKDREGEVTASHGLKGNGWGSPEATSLVLNNLMYMTAKYGDEVPGAEMENAWNALANNEKWSNNLRVTLQFLISLCGVSSDTILLPYIKKVATYLCRNNTIQTMEELLFELQQTEPVNPIVQHCDNPPFYRFTASSKASAAASGTTSSSNTVVAGQDSFPDPEESKILKESDDRFSNVIRAHTRLESRYSNSSGGSYDEDKNDPISPYTGWLLSITEAKQPQPLPMPCSGGCWAPLVDYLPETITPRGPLHRCNIAVIFMTEMVVDHSVREDWALHLPLLLHAVFLGLDHYRPEVFEHSKKLLLHLLIALSCNSNFHAIASVLLQTREMGEAKTLTMQPAYQPEYLYTGGFDFLREDQSSPVPDSGLNSSSTSSSISLGGSSGNLPQMTQEVEDVEAATETDEKASKLIEFLTTRAFGPLWCHEDITPKNQNSKSAEQLSNFLRHVVSVFKDSRSGFHLEQHLSEVALQTALASSSRHYAGRSFQIFRALKQPLSAHALSDLLSRLVEVIGEHGDEIQGYVMEALLTLEAAVDNLSDCLKNSDLFTVLSRSSSPDLSSSSKLTASRKSTGQLNVNPGTPGSGGGGGGSGNTTTAERSRHQRSFSVPKKFGVVDRSSDPPRSATLDRIQACTQQGLSSKTRSNSSLKESLTDPSHVSHPTNLLATIFWVTVALMESDFEFEYLMALRLLNRLLAHMPLEKAENREKLEKLQAQLKWADFPGLQQLLLKGFTSLTTTDLTLQLFSLLTSVSKVPMVDSSQAIGFPLNVLCLLPQLIQHFENPNQFCKDIAERIAQVCLEEKNPKLSNLAHVMTLYKTHSYTRDCATWVNVVCRYLHEAYADITLNMVTYLAELLEKGLPSMQQPLLQVIYSLLSYMDLSVVPVKQFNMEVLKTIEKYVQSIHWREALNILKLVVSRSASLVLPSYQHSDLSKIELHRVWTSASKELPGKTLDFHFDISETPIIGRRYDELQNSSGRDGKPRAMAVTRSASSTSSGSNSNVLVPVSWKRPQYSQKRTKEKLVHVLSLCGQEVGLSKNPSVIFSSCGDLDLPEHQTSLVSSEDGPREQENMDDTNSEQQFRVFRDFDFLDVELEDGEGESMDNFNWGVRRRSLDSLDKCDMQILEERQLSRSTPSLNKMSHEDSDESSEEDLTASQILEHSDLIMNLSPSEEANPMELLTSACDSAPADPHSFNTRMANFEASLPDINNLQISEGSKAEAVPEEEDTTVHEDDLSSSINELPAAFECSDSFSLDMTEAEEKGNRGLDQYTLASFGEGDRGVSPPPSPFFSAILAAFQPAACDDAEEAWRSHINQLMCDSDGSCAVYTFHVFSSLFKNIQKRFCFLTCDAASYLGDNLRGIGSKFVSSSQMLTSCSECPTLFVDAETLLSCGLLDKLKFSVLELQEYLDTYNNRKEATLSWLANCKATFAGGSRDGVITCQPGDSEEKQLELCQRLYKLHFQLLLLYQSYCKLIGQVHEVSSVPELLNMSRELSDLKRNLKEATAAIATDPLYIEGAWSEPTFTSTEAAIQSMLECLKNNELGKALRQIKECRSLWPNDIFGSSSDDEVQTLLNIYFRHQTLGQTGTYALVGSNHSLTEICTKLMELNMEIRDMIRRAQNYRVLTAFLPDSSVSGTSL</sequence>
<name>FRY_MOUSE</name>
<keyword id="KW-0025">Alternative splicing</keyword>
<keyword id="KW-0963">Cytoplasm</keyword>
<keyword id="KW-0206">Cytoskeleton</keyword>
<keyword id="KW-0597">Phosphoprotein</keyword>
<keyword id="KW-1185">Reference proteome</keyword>
<organism>
    <name type="scientific">Mus musculus</name>
    <name type="common">Mouse</name>
    <dbReference type="NCBI Taxonomy" id="10090"/>
    <lineage>
        <taxon>Eukaryota</taxon>
        <taxon>Metazoa</taxon>
        <taxon>Chordata</taxon>
        <taxon>Craniata</taxon>
        <taxon>Vertebrata</taxon>
        <taxon>Euteleostomi</taxon>
        <taxon>Mammalia</taxon>
        <taxon>Eutheria</taxon>
        <taxon>Euarchontoglires</taxon>
        <taxon>Glires</taxon>
        <taxon>Rodentia</taxon>
        <taxon>Myomorpha</taxon>
        <taxon>Muroidea</taxon>
        <taxon>Muridae</taxon>
        <taxon>Murinae</taxon>
        <taxon>Mus</taxon>
        <taxon>Mus</taxon>
    </lineage>
</organism>
<reference key="1">
    <citation type="journal article" date="2005" name="Science">
        <title>The transcriptional landscape of the mammalian genome.</title>
        <authorList>
            <person name="Carninci P."/>
            <person name="Kasukawa T."/>
            <person name="Katayama S."/>
            <person name="Gough J."/>
            <person name="Frith M.C."/>
            <person name="Maeda N."/>
            <person name="Oyama R."/>
            <person name="Ravasi T."/>
            <person name="Lenhard B."/>
            <person name="Wells C."/>
            <person name="Kodzius R."/>
            <person name="Shimokawa K."/>
            <person name="Bajic V.B."/>
            <person name="Brenner S.E."/>
            <person name="Batalov S."/>
            <person name="Forrest A.R."/>
            <person name="Zavolan M."/>
            <person name="Davis M.J."/>
            <person name="Wilming L.G."/>
            <person name="Aidinis V."/>
            <person name="Allen J.E."/>
            <person name="Ambesi-Impiombato A."/>
            <person name="Apweiler R."/>
            <person name="Aturaliya R.N."/>
            <person name="Bailey T.L."/>
            <person name="Bansal M."/>
            <person name="Baxter L."/>
            <person name="Beisel K.W."/>
            <person name="Bersano T."/>
            <person name="Bono H."/>
            <person name="Chalk A.M."/>
            <person name="Chiu K.P."/>
            <person name="Choudhary V."/>
            <person name="Christoffels A."/>
            <person name="Clutterbuck D.R."/>
            <person name="Crowe M.L."/>
            <person name="Dalla E."/>
            <person name="Dalrymple B.P."/>
            <person name="de Bono B."/>
            <person name="Della Gatta G."/>
            <person name="di Bernardo D."/>
            <person name="Down T."/>
            <person name="Engstrom P."/>
            <person name="Fagiolini M."/>
            <person name="Faulkner G."/>
            <person name="Fletcher C.F."/>
            <person name="Fukushima T."/>
            <person name="Furuno M."/>
            <person name="Futaki S."/>
            <person name="Gariboldi M."/>
            <person name="Georgii-Hemming P."/>
            <person name="Gingeras T.R."/>
            <person name="Gojobori T."/>
            <person name="Green R.E."/>
            <person name="Gustincich S."/>
            <person name="Harbers M."/>
            <person name="Hayashi Y."/>
            <person name="Hensch T.K."/>
            <person name="Hirokawa N."/>
            <person name="Hill D."/>
            <person name="Huminiecki L."/>
            <person name="Iacono M."/>
            <person name="Ikeo K."/>
            <person name="Iwama A."/>
            <person name="Ishikawa T."/>
            <person name="Jakt M."/>
            <person name="Kanapin A."/>
            <person name="Katoh M."/>
            <person name="Kawasawa Y."/>
            <person name="Kelso J."/>
            <person name="Kitamura H."/>
            <person name="Kitano H."/>
            <person name="Kollias G."/>
            <person name="Krishnan S.P."/>
            <person name="Kruger A."/>
            <person name="Kummerfeld S.K."/>
            <person name="Kurochkin I.V."/>
            <person name="Lareau L.F."/>
            <person name="Lazarevic D."/>
            <person name="Lipovich L."/>
            <person name="Liu J."/>
            <person name="Liuni S."/>
            <person name="McWilliam S."/>
            <person name="Madan Babu M."/>
            <person name="Madera M."/>
            <person name="Marchionni L."/>
            <person name="Matsuda H."/>
            <person name="Matsuzawa S."/>
            <person name="Miki H."/>
            <person name="Mignone F."/>
            <person name="Miyake S."/>
            <person name="Morris K."/>
            <person name="Mottagui-Tabar S."/>
            <person name="Mulder N."/>
            <person name="Nakano N."/>
            <person name="Nakauchi H."/>
            <person name="Ng P."/>
            <person name="Nilsson R."/>
            <person name="Nishiguchi S."/>
            <person name="Nishikawa S."/>
            <person name="Nori F."/>
            <person name="Ohara O."/>
            <person name="Okazaki Y."/>
            <person name="Orlando V."/>
            <person name="Pang K.C."/>
            <person name="Pavan W.J."/>
            <person name="Pavesi G."/>
            <person name="Pesole G."/>
            <person name="Petrovsky N."/>
            <person name="Piazza S."/>
            <person name="Reed J."/>
            <person name="Reid J.F."/>
            <person name="Ring B.Z."/>
            <person name="Ringwald M."/>
            <person name="Rost B."/>
            <person name="Ruan Y."/>
            <person name="Salzberg S.L."/>
            <person name="Sandelin A."/>
            <person name="Schneider C."/>
            <person name="Schoenbach C."/>
            <person name="Sekiguchi K."/>
            <person name="Semple C.A."/>
            <person name="Seno S."/>
            <person name="Sessa L."/>
            <person name="Sheng Y."/>
            <person name="Shibata Y."/>
            <person name="Shimada H."/>
            <person name="Shimada K."/>
            <person name="Silva D."/>
            <person name="Sinclair B."/>
            <person name="Sperling S."/>
            <person name="Stupka E."/>
            <person name="Sugiura K."/>
            <person name="Sultana R."/>
            <person name="Takenaka Y."/>
            <person name="Taki K."/>
            <person name="Tammoja K."/>
            <person name="Tan S.L."/>
            <person name="Tang S."/>
            <person name="Taylor M.S."/>
            <person name="Tegner J."/>
            <person name="Teichmann S.A."/>
            <person name="Ueda H.R."/>
            <person name="van Nimwegen E."/>
            <person name="Verardo R."/>
            <person name="Wei C.L."/>
            <person name="Yagi K."/>
            <person name="Yamanishi H."/>
            <person name="Zabarovsky E."/>
            <person name="Zhu S."/>
            <person name="Zimmer A."/>
            <person name="Hide W."/>
            <person name="Bult C."/>
            <person name="Grimmond S.M."/>
            <person name="Teasdale R.D."/>
            <person name="Liu E.T."/>
            <person name="Brusic V."/>
            <person name="Quackenbush J."/>
            <person name="Wahlestedt C."/>
            <person name="Mattick J.S."/>
            <person name="Hume D.A."/>
            <person name="Kai C."/>
            <person name="Sasaki D."/>
            <person name="Tomaru Y."/>
            <person name="Fukuda S."/>
            <person name="Kanamori-Katayama M."/>
            <person name="Suzuki M."/>
            <person name="Aoki J."/>
            <person name="Arakawa T."/>
            <person name="Iida J."/>
            <person name="Imamura K."/>
            <person name="Itoh M."/>
            <person name="Kato T."/>
            <person name="Kawaji H."/>
            <person name="Kawagashira N."/>
            <person name="Kawashima T."/>
            <person name="Kojima M."/>
            <person name="Kondo S."/>
            <person name="Konno H."/>
            <person name="Nakano K."/>
            <person name="Ninomiya N."/>
            <person name="Nishio T."/>
            <person name="Okada M."/>
            <person name="Plessy C."/>
            <person name="Shibata K."/>
            <person name="Shiraki T."/>
            <person name="Suzuki S."/>
            <person name="Tagami M."/>
            <person name="Waki K."/>
            <person name="Watahiki A."/>
            <person name="Okamura-Oho Y."/>
            <person name="Suzuki H."/>
            <person name="Kawai J."/>
            <person name="Hayashizaki Y."/>
        </authorList>
    </citation>
    <scope>NUCLEOTIDE SEQUENCE [LARGE SCALE MRNA] (ISOFORM 3)</scope>
    <scope>NUCLEOTIDE SEQUENCE [LARGE SCALE MRNA] OF 2397-3020 (ISOFORM 2)</scope>
    <source>
        <strain>C57BL/6J</strain>
        <tissue>Diencephalon</tissue>
        <tissue>Embryonic head</tissue>
    </source>
</reference>
<reference key="2">
    <citation type="journal article" date="2009" name="PLoS Biol.">
        <title>Lineage-specific biology revealed by a finished genome assembly of the mouse.</title>
        <authorList>
            <person name="Church D.M."/>
            <person name="Goodstadt L."/>
            <person name="Hillier L.W."/>
            <person name="Zody M.C."/>
            <person name="Goldstein S."/>
            <person name="She X."/>
            <person name="Bult C.J."/>
            <person name="Agarwala R."/>
            <person name="Cherry J.L."/>
            <person name="DiCuccio M."/>
            <person name="Hlavina W."/>
            <person name="Kapustin Y."/>
            <person name="Meric P."/>
            <person name="Maglott D."/>
            <person name="Birtle Z."/>
            <person name="Marques A.C."/>
            <person name="Graves T."/>
            <person name="Zhou S."/>
            <person name="Teague B."/>
            <person name="Potamousis K."/>
            <person name="Churas C."/>
            <person name="Place M."/>
            <person name="Herschleb J."/>
            <person name="Runnheim R."/>
            <person name="Forrest D."/>
            <person name="Amos-Landgraf J."/>
            <person name="Schwartz D.C."/>
            <person name="Cheng Z."/>
            <person name="Lindblad-Toh K."/>
            <person name="Eichler E.E."/>
            <person name="Ponting C.P."/>
        </authorList>
    </citation>
    <scope>NUCLEOTIDE SEQUENCE [LARGE SCALE GENOMIC DNA]</scope>
    <source>
        <strain>C57BL/6J</strain>
    </source>
</reference>
<reference key="3">
    <citation type="submission" date="2005-02" db="EMBL/GenBank/DDBJ databases">
        <title>Prediction of the coding sequences of mouse homologues of KIAA gene. The complete nucleotide sequences of mouse KIAA-homologous cDNAs identified by screening of terminal sequences of cDNA clones randomly sampled from size-fractionated libraries.</title>
        <authorList>
            <person name="Okazaki N."/>
            <person name="Kikuno R.F."/>
            <person name="Ohara R."/>
            <person name="Inamoto S."/>
            <person name="Nagase T."/>
            <person name="Ohara O."/>
            <person name="Koga H."/>
        </authorList>
    </citation>
    <scope>NUCLEOTIDE SEQUENCE [LARGE SCALE MRNA] OF 2014-3020 (ISOFORM 2)</scope>
    <source>
        <tissue>Brain</tissue>
    </source>
</reference>
<reference key="4">
    <citation type="journal article" date="2004" name="Genome Res.">
        <title>The status, quality, and expansion of the NIH full-length cDNA project: the Mammalian Gene Collection (MGC).</title>
        <authorList>
            <consortium name="The MGC Project Team"/>
        </authorList>
    </citation>
    <scope>NUCLEOTIDE SEQUENCE [LARGE SCALE MRNA] OF 2176-3020 (ISOFORM 2)</scope>
    <source>
        <strain>C57BL/6J</strain>
        <strain>FVB/N</strain>
        <tissue>Embryonic brain</tissue>
        <tissue>Mammary tumor</tissue>
    </source>
</reference>
<reference key="5">
    <citation type="journal article" date="2010" name="Cell">
        <title>A tissue-specific atlas of mouse protein phosphorylation and expression.</title>
        <authorList>
            <person name="Huttlin E.L."/>
            <person name="Jedrychowski M.P."/>
            <person name="Elias J.E."/>
            <person name="Goswami T."/>
            <person name="Rad R."/>
            <person name="Beausoleil S.A."/>
            <person name="Villen J."/>
            <person name="Haas W."/>
            <person name="Sowa M.E."/>
            <person name="Gygi S.P."/>
        </authorList>
    </citation>
    <scope>PHOSPHORYLATION [LARGE SCALE ANALYSIS] AT SER-1382; SER-1383; SER-1936; SER-1940; SER-2427; SER-2428; SER-2495 AND SER-2815</scope>
    <scope>IDENTIFICATION BY MASS SPECTROMETRY [LARGE SCALE ANALYSIS]</scope>
    <source>
        <tissue>Brain</tissue>
        <tissue>Brown adipose tissue</tissue>
        <tissue>Heart</tissue>
        <tissue>Kidney</tissue>
        <tissue>Lung</tissue>
        <tissue>Pancreas</tissue>
        <tissue>Spleen</tissue>
        <tissue>Testis</tissue>
    </source>
</reference>
<reference key="6">
    <citation type="journal article" date="2012" name="J. Biol. Chem.">
        <title>Furry protein promotes Aurora A-mediated polo-like kinase 1 activation.</title>
        <authorList>
            <person name="Ikeda M."/>
            <person name="Chiba S."/>
            <person name="Ohashi K."/>
            <person name="Mizuno K."/>
        </authorList>
    </citation>
    <scope>FUNCTION</scope>
    <scope>INTERACTION WITH AURKA AND PLK1</scope>
    <scope>PHOSPHORYLATION AT THR-2516 BY CDK1</scope>
    <scope>MUTAGENESIS OF THR-2516</scope>
</reference>